<proteinExistence type="inferred from homology"/>
<accession>Q89A24</accession>
<dbReference type="EMBL" id="AE016826">
    <property type="protein sequence ID" value="AAO27233.1"/>
    <property type="molecule type" value="Genomic_DNA"/>
</dbReference>
<dbReference type="RefSeq" id="WP_011091634.1">
    <property type="nucleotide sequence ID" value="NC_004545.1"/>
</dbReference>
<dbReference type="STRING" id="224915.bbp_531"/>
<dbReference type="KEGG" id="bab:bbp_531"/>
<dbReference type="eggNOG" id="COG0306">
    <property type="taxonomic scope" value="Bacteria"/>
</dbReference>
<dbReference type="HOGENOM" id="CLU_015355_4_0_6"/>
<dbReference type="OrthoDB" id="9779554at2"/>
<dbReference type="Proteomes" id="UP000000601">
    <property type="component" value="Chromosome"/>
</dbReference>
<dbReference type="GO" id="GO:0005886">
    <property type="term" value="C:plasma membrane"/>
    <property type="evidence" value="ECO:0007669"/>
    <property type="project" value="UniProtKB-SubCell"/>
</dbReference>
<dbReference type="GO" id="GO:0005315">
    <property type="term" value="F:phosphate transmembrane transporter activity"/>
    <property type="evidence" value="ECO:0007669"/>
    <property type="project" value="InterPro"/>
</dbReference>
<dbReference type="GO" id="GO:0015293">
    <property type="term" value="F:symporter activity"/>
    <property type="evidence" value="ECO:0007669"/>
    <property type="project" value="UniProtKB-KW"/>
</dbReference>
<dbReference type="GO" id="GO:0035435">
    <property type="term" value="P:phosphate ion transmembrane transport"/>
    <property type="evidence" value="ECO:0007669"/>
    <property type="project" value="TreeGrafter"/>
</dbReference>
<dbReference type="InterPro" id="IPR001204">
    <property type="entry name" value="Phos_transporter"/>
</dbReference>
<dbReference type="PANTHER" id="PTHR11101:SF65">
    <property type="entry name" value="LOW-AFFINITY INORGANIC PHOSPHATE TRANSPORTER PITA-RELATED"/>
    <property type="match status" value="1"/>
</dbReference>
<dbReference type="PANTHER" id="PTHR11101">
    <property type="entry name" value="PHOSPHATE TRANSPORTER"/>
    <property type="match status" value="1"/>
</dbReference>
<dbReference type="Pfam" id="PF01384">
    <property type="entry name" value="PHO4"/>
    <property type="match status" value="1"/>
</dbReference>
<comment type="function">
    <text evidence="1">Low-affinity inorganic phosphate transporter.</text>
</comment>
<comment type="catalytic activity">
    <reaction evidence="1">
        <text>phosphate(in) + H(+)(in) = phosphate(out) + H(+)(out)</text>
        <dbReference type="Rhea" id="RHEA:29939"/>
        <dbReference type="ChEBI" id="CHEBI:15378"/>
        <dbReference type="ChEBI" id="CHEBI:43474"/>
    </reaction>
</comment>
<comment type="subcellular location">
    <subcellularLocation>
        <location evidence="3">Cell membrane</location>
        <topology evidence="2">Multi-pass membrane protein</topology>
    </subcellularLocation>
</comment>
<comment type="similarity">
    <text evidence="3">Belongs to the inorganic phosphate transporter (PiT) (TC 2.A.20) family. Pit subfamily.</text>
</comment>
<reference key="1">
    <citation type="journal article" date="2003" name="Proc. Natl. Acad. Sci. U.S.A.">
        <title>Reductive genome evolution in Buchnera aphidicola.</title>
        <authorList>
            <person name="van Ham R.C.H.J."/>
            <person name="Kamerbeek J."/>
            <person name="Palacios C."/>
            <person name="Rausell C."/>
            <person name="Abascal F."/>
            <person name="Bastolla U."/>
            <person name="Fernandez J.M."/>
            <person name="Jimenez L."/>
            <person name="Postigo M."/>
            <person name="Silva F.J."/>
            <person name="Tamames J."/>
            <person name="Viguera E."/>
            <person name="Latorre A."/>
            <person name="Valencia A."/>
            <person name="Moran F."/>
            <person name="Moya A."/>
        </authorList>
    </citation>
    <scope>NUCLEOTIDE SEQUENCE [LARGE SCALE GENOMIC DNA]</scope>
    <source>
        <strain>Bp</strain>
    </source>
</reference>
<organism>
    <name type="scientific">Buchnera aphidicola subsp. Baizongia pistaciae (strain Bp)</name>
    <dbReference type="NCBI Taxonomy" id="224915"/>
    <lineage>
        <taxon>Bacteria</taxon>
        <taxon>Pseudomonadati</taxon>
        <taxon>Pseudomonadota</taxon>
        <taxon>Gammaproteobacteria</taxon>
        <taxon>Enterobacterales</taxon>
        <taxon>Erwiniaceae</taxon>
        <taxon>Buchnera</taxon>
    </lineage>
</organism>
<feature type="chain" id="PRO_0000080789" description="Low-affinity inorganic phosphate transporter">
    <location>
        <begin position="1"/>
        <end position="499"/>
    </location>
</feature>
<feature type="transmembrane region" description="Helical" evidence="2">
    <location>
        <begin position="4"/>
        <end position="26"/>
    </location>
</feature>
<feature type="transmembrane region" description="Helical" evidence="2">
    <location>
        <begin position="56"/>
        <end position="78"/>
    </location>
</feature>
<feature type="transmembrane region" description="Helical" evidence="2">
    <location>
        <begin position="98"/>
        <end position="117"/>
    </location>
</feature>
<feature type="transmembrane region" description="Helical" evidence="2">
    <location>
        <begin position="124"/>
        <end position="146"/>
    </location>
</feature>
<feature type="transmembrane region" description="Helical" evidence="2">
    <location>
        <begin position="156"/>
        <end position="178"/>
    </location>
</feature>
<feature type="transmembrane region" description="Helical" evidence="2">
    <location>
        <begin position="207"/>
        <end position="224"/>
    </location>
</feature>
<feature type="transmembrane region" description="Helical" evidence="2">
    <location>
        <begin position="234"/>
        <end position="253"/>
    </location>
</feature>
<feature type="transmembrane region" description="Helical" evidence="2">
    <location>
        <begin position="342"/>
        <end position="359"/>
    </location>
</feature>
<feature type="transmembrane region" description="Helical" evidence="2">
    <location>
        <begin position="379"/>
        <end position="401"/>
    </location>
</feature>
<feature type="transmembrane region" description="Helical" evidence="2">
    <location>
        <begin position="473"/>
        <end position="495"/>
    </location>
</feature>
<gene>
    <name type="primary">pit</name>
    <name type="synonym">pitA</name>
    <name type="ordered locus">bbp_531</name>
</gene>
<evidence type="ECO:0000250" key="1">
    <source>
        <dbReference type="UniProtKB" id="P0AFJ7"/>
    </source>
</evidence>
<evidence type="ECO:0000255" key="2"/>
<evidence type="ECO:0000305" key="3"/>
<protein>
    <recommendedName>
        <fullName>Low-affinity inorganic phosphate transporter</fullName>
    </recommendedName>
</protein>
<keyword id="KW-1003">Cell membrane</keyword>
<keyword id="KW-0472">Membrane</keyword>
<keyword id="KW-0592">Phosphate transport</keyword>
<keyword id="KW-1185">Reference proteome</keyword>
<keyword id="KW-0769">Symport</keyword>
<keyword id="KW-0812">Transmembrane</keyword>
<keyword id="KW-1133">Transmembrane helix</keyword>
<keyword id="KW-0813">Transport</keyword>
<sequence>MSYYFSFFCYNSSVVFSCFSLLFIFIYEVINGFHDSANAIALIIYTRSMNEKMAILISGILNFLGVFFGGLSIAYAIIYLLPSNLLLNINTSCGLKAIFSILLSAILWNLCTWYLSLPTSSSHTLIGSIIGINFVNAFINNFSILSLISFNKIIYVFLSLILSPICGLIIAGSLVFLLKKYYNSKYKEYCINISPVYYRIQKKKQSLLWIKITLILSSFGISYFHGANDGQKGIGLIMLVLICIFPSKYLINLNTSTYDIINTRISIDSFEKYYLRNQTLIKQNVSNIMFKEIIQPLLFLKNIDNTKNDNVLVIINFMRNLLHNISSYKELNVIQCHQLRQSLLCIGNFMEVLSHFSIVQVKDKHFFYCLKKNLLSTIEYAPNWVVTFIALSLSIGTIIGWRRITNTFQNKLGTQDITYAQAISAQLTTACSVSLASCSGIPVSTTHIMSSSLVGTMLVNRSGLRINTIKKTIIIWILTIPISMLLASFLYWISLKCFN</sequence>
<name>PIT_BUCBP</name>